<organismHost>
    <name type="scientific">Escherichia coli</name>
    <dbReference type="NCBI Taxonomy" id="562"/>
</organismHost>
<organism>
    <name type="scientific">Enterobacteria phage T4</name>
    <name type="common">Bacteriophage T4</name>
    <dbReference type="NCBI Taxonomy" id="10665"/>
    <lineage>
        <taxon>Viruses</taxon>
        <taxon>Duplodnaviria</taxon>
        <taxon>Heunggongvirae</taxon>
        <taxon>Uroviricota</taxon>
        <taxon>Caudoviricetes</taxon>
        <taxon>Straboviridae</taxon>
        <taxon>Tevenvirinae</taxon>
        <taxon>Tequatrovirus</taxon>
    </lineage>
</organism>
<name>Y12G_BPT4</name>
<keyword id="KW-1185">Reference proteome</keyword>
<protein>
    <recommendedName>
        <fullName>Uncharacterized 17.1 kDa protein in Gp30-rIII intergenic region</fullName>
    </recommendedName>
</protein>
<proteinExistence type="predicted"/>
<accession>P32276</accession>
<feature type="chain" id="PRO_0000165167" description="Uncharacterized 17.1 kDa protein in Gp30-rIII intergenic region">
    <location>
        <begin position="1"/>
        <end position="152"/>
    </location>
</feature>
<dbReference type="EMBL" id="X53848">
    <property type="protein sequence ID" value="CAA37844.1"/>
    <property type="molecule type" value="Genomic_DNA"/>
</dbReference>
<dbReference type="EMBL" id="AF158101">
    <property type="protein sequence ID" value="AAD42443.1"/>
    <property type="molecule type" value="Genomic_DNA"/>
</dbReference>
<dbReference type="PIR" id="S27150">
    <property type="entry name" value="S27150"/>
</dbReference>
<dbReference type="RefSeq" id="NP_049816.1">
    <property type="nucleotide sequence ID" value="NC_000866.4"/>
</dbReference>
<dbReference type="SMR" id="P32276"/>
<dbReference type="GeneID" id="1258574"/>
<dbReference type="KEGG" id="vg:1258574"/>
<dbReference type="OrthoDB" id="20109at10239"/>
<dbReference type="Proteomes" id="UP000009087">
    <property type="component" value="Segment"/>
</dbReference>
<dbReference type="Gene3D" id="1.10.357.40">
    <property type="entry name" value="YbiA-like"/>
    <property type="match status" value="1"/>
</dbReference>
<dbReference type="InterPro" id="IPR012596">
    <property type="entry name" value="Phage_T4_Y12G"/>
</dbReference>
<dbReference type="InterPro" id="IPR037238">
    <property type="entry name" value="YbiA-like_sf"/>
</dbReference>
<dbReference type="Pfam" id="PF08010">
    <property type="entry name" value="Phage_30_3"/>
    <property type="match status" value="1"/>
</dbReference>
<dbReference type="SUPFAM" id="SSF143990">
    <property type="entry name" value="YbiA-like"/>
    <property type="match status" value="1"/>
</dbReference>
<sequence length="152" mass="17089">MSELEIRSNFRWPSCALSNFAQWPFVMDGIQFGGLEGFLQGCKVKNVEQQRRIFGLSGLAAQQAGRSYARAQDRGTLFWLGVPFSRYSPAWKELYTNAYFEAAIQNKGFRDALQASKGKVLKHSIASGLTKDDTILTEAEFIDVLNLLRDSL</sequence>
<reference key="1">
    <citation type="journal article" date="1992" name="DNA Seq.">
        <title>The nucleotide sequence between genes 31 and 30 of bacteriophage T4.</title>
        <authorList>
            <person name="Nivinskas R."/>
            <person name="Zajanckauskaite A."/>
            <person name="Raudonikiene A."/>
            <person name="Viteniene I."/>
        </authorList>
    </citation>
    <scope>NUCLEOTIDE SEQUENCE [GENOMIC DNA]</scope>
</reference>
<reference key="2">
    <citation type="journal article" date="2003" name="Microbiol. Mol. Biol. Rev.">
        <title>Bacteriophage T4 genome.</title>
        <authorList>
            <person name="Miller E.S."/>
            <person name="Kutter E."/>
            <person name="Mosig G."/>
            <person name="Arisaka F."/>
            <person name="Kunisawa T."/>
            <person name="Ruger W."/>
        </authorList>
    </citation>
    <scope>NUCLEOTIDE SEQUENCE [LARGE SCALE GENOMIC DNA]</scope>
</reference>
<gene>
    <name type="primary">y12G</name>
    <name type="synonym">30.3</name>
</gene>